<proteinExistence type="inferred from homology"/>
<name>KATG_SYNR3</name>
<accession>A5GTX8</accession>
<evidence type="ECO:0000255" key="1">
    <source>
        <dbReference type="HAMAP-Rule" id="MF_01961"/>
    </source>
</evidence>
<evidence type="ECO:0000256" key="2">
    <source>
        <dbReference type="SAM" id="MobiDB-lite"/>
    </source>
</evidence>
<gene>
    <name evidence="1" type="primary">katG</name>
    <name type="ordered locus">SynRCC307_1434</name>
</gene>
<dbReference type="EC" id="1.11.1.21" evidence="1"/>
<dbReference type="EMBL" id="CT978603">
    <property type="protein sequence ID" value="CAK28337.1"/>
    <property type="molecule type" value="Genomic_DNA"/>
</dbReference>
<dbReference type="SMR" id="A5GTX8"/>
<dbReference type="STRING" id="316278.SynRCC307_1434"/>
<dbReference type="PeroxiBase" id="6243">
    <property type="entry name" value="SspCP01_RCC307"/>
</dbReference>
<dbReference type="KEGG" id="syr:SynRCC307_1434"/>
<dbReference type="eggNOG" id="COG0376">
    <property type="taxonomic scope" value="Bacteria"/>
</dbReference>
<dbReference type="HOGENOM" id="CLU_025424_2_0_3"/>
<dbReference type="Proteomes" id="UP000001115">
    <property type="component" value="Chromosome"/>
</dbReference>
<dbReference type="GO" id="GO:0005829">
    <property type="term" value="C:cytosol"/>
    <property type="evidence" value="ECO:0007669"/>
    <property type="project" value="TreeGrafter"/>
</dbReference>
<dbReference type="GO" id="GO:0004096">
    <property type="term" value="F:catalase activity"/>
    <property type="evidence" value="ECO:0007669"/>
    <property type="project" value="UniProtKB-UniRule"/>
</dbReference>
<dbReference type="GO" id="GO:0020037">
    <property type="term" value="F:heme binding"/>
    <property type="evidence" value="ECO:0007669"/>
    <property type="project" value="InterPro"/>
</dbReference>
<dbReference type="GO" id="GO:0046872">
    <property type="term" value="F:metal ion binding"/>
    <property type="evidence" value="ECO:0007669"/>
    <property type="project" value="UniProtKB-KW"/>
</dbReference>
<dbReference type="GO" id="GO:0070301">
    <property type="term" value="P:cellular response to hydrogen peroxide"/>
    <property type="evidence" value="ECO:0007669"/>
    <property type="project" value="TreeGrafter"/>
</dbReference>
<dbReference type="GO" id="GO:0042744">
    <property type="term" value="P:hydrogen peroxide catabolic process"/>
    <property type="evidence" value="ECO:0007669"/>
    <property type="project" value="UniProtKB-KW"/>
</dbReference>
<dbReference type="CDD" id="cd00649">
    <property type="entry name" value="catalase_peroxidase_1"/>
    <property type="match status" value="1"/>
</dbReference>
<dbReference type="CDD" id="cd08200">
    <property type="entry name" value="catalase_peroxidase_2"/>
    <property type="match status" value="1"/>
</dbReference>
<dbReference type="FunFam" id="1.10.420.10:FF:000004">
    <property type="entry name" value="Catalase-peroxidase"/>
    <property type="match status" value="1"/>
</dbReference>
<dbReference type="FunFam" id="1.10.520.10:FF:000002">
    <property type="entry name" value="Catalase-peroxidase"/>
    <property type="match status" value="1"/>
</dbReference>
<dbReference type="Gene3D" id="1.10.520.10">
    <property type="match status" value="2"/>
</dbReference>
<dbReference type="Gene3D" id="1.10.420.10">
    <property type="entry name" value="Peroxidase, domain 2"/>
    <property type="match status" value="2"/>
</dbReference>
<dbReference type="HAMAP" id="MF_01961">
    <property type="entry name" value="Catal_peroxid"/>
    <property type="match status" value="1"/>
</dbReference>
<dbReference type="InterPro" id="IPR000763">
    <property type="entry name" value="Catalase_peroxidase"/>
</dbReference>
<dbReference type="InterPro" id="IPR002016">
    <property type="entry name" value="Haem_peroxidase"/>
</dbReference>
<dbReference type="InterPro" id="IPR010255">
    <property type="entry name" value="Haem_peroxidase_sf"/>
</dbReference>
<dbReference type="InterPro" id="IPR019794">
    <property type="entry name" value="Peroxidases_AS"/>
</dbReference>
<dbReference type="InterPro" id="IPR019793">
    <property type="entry name" value="Peroxidases_heam-ligand_BS"/>
</dbReference>
<dbReference type="NCBIfam" id="TIGR00198">
    <property type="entry name" value="cat_per_HPI"/>
    <property type="match status" value="1"/>
</dbReference>
<dbReference type="NCBIfam" id="NF011635">
    <property type="entry name" value="PRK15061.1"/>
    <property type="match status" value="1"/>
</dbReference>
<dbReference type="PANTHER" id="PTHR30555:SF0">
    <property type="entry name" value="CATALASE-PEROXIDASE"/>
    <property type="match status" value="1"/>
</dbReference>
<dbReference type="PANTHER" id="PTHR30555">
    <property type="entry name" value="HYDROPEROXIDASE I, BIFUNCTIONAL CATALASE-PEROXIDASE"/>
    <property type="match status" value="1"/>
</dbReference>
<dbReference type="Pfam" id="PF00141">
    <property type="entry name" value="peroxidase"/>
    <property type="match status" value="2"/>
</dbReference>
<dbReference type="PRINTS" id="PR00460">
    <property type="entry name" value="BPEROXIDASE"/>
</dbReference>
<dbReference type="PRINTS" id="PR00458">
    <property type="entry name" value="PEROXIDASE"/>
</dbReference>
<dbReference type="SUPFAM" id="SSF48113">
    <property type="entry name" value="Heme-dependent peroxidases"/>
    <property type="match status" value="2"/>
</dbReference>
<dbReference type="PROSITE" id="PS00435">
    <property type="entry name" value="PEROXIDASE_1"/>
    <property type="match status" value="1"/>
</dbReference>
<dbReference type="PROSITE" id="PS00436">
    <property type="entry name" value="PEROXIDASE_2"/>
    <property type="match status" value="1"/>
</dbReference>
<dbReference type="PROSITE" id="PS50873">
    <property type="entry name" value="PEROXIDASE_4"/>
    <property type="match status" value="1"/>
</dbReference>
<keyword id="KW-0349">Heme</keyword>
<keyword id="KW-0376">Hydrogen peroxide</keyword>
<keyword id="KW-0408">Iron</keyword>
<keyword id="KW-0479">Metal-binding</keyword>
<keyword id="KW-0560">Oxidoreductase</keyword>
<keyword id="KW-0575">Peroxidase</keyword>
<keyword id="KW-1185">Reference proteome</keyword>
<keyword id="KW-0732">Signal</keyword>
<comment type="function">
    <text evidence="1">Bifunctional enzyme with both catalase and broad-spectrum peroxidase activity.</text>
</comment>
<comment type="catalytic activity">
    <reaction evidence="1">
        <text>H2O2 + AH2 = A + 2 H2O</text>
        <dbReference type="Rhea" id="RHEA:30275"/>
        <dbReference type="ChEBI" id="CHEBI:13193"/>
        <dbReference type="ChEBI" id="CHEBI:15377"/>
        <dbReference type="ChEBI" id="CHEBI:16240"/>
        <dbReference type="ChEBI" id="CHEBI:17499"/>
        <dbReference type="EC" id="1.11.1.21"/>
    </reaction>
</comment>
<comment type="catalytic activity">
    <reaction evidence="1">
        <text>2 H2O2 = O2 + 2 H2O</text>
        <dbReference type="Rhea" id="RHEA:20309"/>
        <dbReference type="ChEBI" id="CHEBI:15377"/>
        <dbReference type="ChEBI" id="CHEBI:15379"/>
        <dbReference type="ChEBI" id="CHEBI:16240"/>
        <dbReference type="EC" id="1.11.1.21"/>
    </reaction>
</comment>
<comment type="cofactor">
    <cofactor evidence="1">
        <name>heme b</name>
        <dbReference type="ChEBI" id="CHEBI:60344"/>
    </cofactor>
    <text evidence="1">Binds 1 heme b (iron(II)-protoporphyrin IX) group per dimer.</text>
</comment>
<comment type="subunit">
    <text evidence="1">Homodimer or homotetramer.</text>
</comment>
<comment type="PTM">
    <text evidence="1">Formation of the three residue Trp-Tyr-Met cross-link is important for the catalase, but not the peroxidase activity of the enzyme.</text>
</comment>
<comment type="similarity">
    <text evidence="1">Belongs to the peroxidase family. Peroxidase/catalase subfamily.</text>
</comment>
<reference key="1">
    <citation type="submission" date="2006-05" db="EMBL/GenBank/DDBJ databases">
        <authorList>
            <consortium name="Genoscope"/>
        </authorList>
    </citation>
    <scope>NUCLEOTIDE SEQUENCE [LARGE SCALE GENOMIC DNA]</scope>
    <source>
        <strain>RCC307</strain>
    </source>
</reference>
<sequence>MSMAEMRCPFSGHGAATTPASATTNQHWWPEQINLGLLHQHNPAANPLGSNFDYRQAFNSLDLNAVKADLMALMTDSQSWWPADWGHYGGLFIRMAWHSAGTYRLADGRGGAGHGNQRFAPLNSWPDNTNLDKARRLLWPIKAKYGSNLSWADLIILAGNCALESMGLPTAGFAGGREDIWEPEDDIYWGSETSWLSDERHDNDGAIESPLAATEMGLIYVNPEGPHGEPDPVASGREVRDTFARMGMNNEETVALVAGGHTFGKAHGAAPSAHLGADPEGAALEQLGLGWQNTYASGCGADTITSGIEGAWKPNPTRWDQGYFEMLFGYEWELHQSPAGAWQWHPKDVKAEHMIPDAHVPGRSAPPMMTTADLSLRFDPVYEPIARRFLGDPQAFGNAFAQAWFKLTHRDLGPRSCYLGADVPEAVMSWQDPLPTTSHPTIDAPAVDALKQELLNTGLSHGELISTAWASAASFRQSDRRGGANGARLRLQPQCNWELNNPEQLKRVLSVLEAVQMRFNQQHQGGMQVSLADLIVLSGSAAVEQAMAATGQRCRVRFTPGRVDASAEQTDNASFNALKPIADGFRNYLRSDLPLKAEQLLVDRAQQLHLSAPEMTALIGGFRVLGLNWDGSDIGVFTSRPGQFSNDFFVNLLDMSTQWSPVEGHSNLYQGIDTETKQPRWRASRVDLVFGSHAQLRAIAEVYGQAGGSARLAADFSAAWSKVMELDRFDLL</sequence>
<organism>
    <name type="scientific">Synechococcus sp. (strain RCC307)</name>
    <dbReference type="NCBI Taxonomy" id="316278"/>
    <lineage>
        <taxon>Bacteria</taxon>
        <taxon>Bacillati</taxon>
        <taxon>Cyanobacteriota</taxon>
        <taxon>Cyanophyceae</taxon>
        <taxon>Synechococcales</taxon>
        <taxon>Synechococcaceae</taxon>
        <taxon>Synechococcus</taxon>
    </lineage>
</organism>
<feature type="signal peptide" evidence="1">
    <location>
        <begin position="1"/>
        <end position="22"/>
    </location>
</feature>
<feature type="chain" id="PRO_0000354944" description="Catalase-peroxidase">
    <location>
        <begin position="23"/>
        <end position="732"/>
    </location>
</feature>
<feature type="region of interest" description="Disordered" evidence="2">
    <location>
        <begin position="1"/>
        <end position="21"/>
    </location>
</feature>
<feature type="active site" description="Proton acceptor" evidence="1">
    <location>
        <position position="98"/>
    </location>
</feature>
<feature type="binding site" description="axial binding residue" evidence="1">
    <location>
        <position position="261"/>
    </location>
    <ligand>
        <name>heme b</name>
        <dbReference type="ChEBI" id="CHEBI:60344"/>
    </ligand>
    <ligandPart>
        <name>Fe</name>
        <dbReference type="ChEBI" id="CHEBI:18248"/>
    </ligandPart>
</feature>
<feature type="site" description="Transition state stabilizer" evidence="1">
    <location>
        <position position="94"/>
    </location>
</feature>
<feature type="cross-link" description="Tryptophyl-tyrosyl-methioninium (Trp-Tyr) (with M-246)" evidence="1">
    <location>
        <begin position="97"/>
        <end position="220"/>
    </location>
</feature>
<feature type="cross-link" description="Tryptophyl-tyrosyl-methioninium (Tyr-Met) (with W-97)" evidence="1">
    <location>
        <begin position="220"/>
        <end position="246"/>
    </location>
</feature>
<protein>
    <recommendedName>
        <fullName evidence="1">Catalase-peroxidase</fullName>
        <shortName evidence="1">CP</shortName>
        <ecNumber evidence="1">1.11.1.21</ecNumber>
    </recommendedName>
    <alternativeName>
        <fullName evidence="1">Peroxidase/catalase</fullName>
    </alternativeName>
</protein>